<feature type="chain" id="PRO_0000151042" description="UPF0284 protein PMT_1350">
    <location>
        <begin position="1"/>
        <end position="403"/>
    </location>
</feature>
<protein>
    <recommendedName>
        <fullName evidence="1">UPF0284 protein PMT_1350</fullName>
    </recommendedName>
</protein>
<dbReference type="EMBL" id="BX548175">
    <property type="protein sequence ID" value="CAE21525.1"/>
    <property type="status" value="ALT_INIT"/>
    <property type="molecule type" value="Genomic_DNA"/>
</dbReference>
<dbReference type="RefSeq" id="WP_052646183.1">
    <property type="nucleotide sequence ID" value="NC_005071.1"/>
</dbReference>
<dbReference type="SMR" id="P59919"/>
<dbReference type="KEGG" id="pmt:PMT_1350"/>
<dbReference type="eggNOG" id="COG2038">
    <property type="taxonomic scope" value="Bacteria"/>
</dbReference>
<dbReference type="HOGENOM" id="CLU_053134_1_0_3"/>
<dbReference type="Proteomes" id="UP000001423">
    <property type="component" value="Chromosome"/>
</dbReference>
<dbReference type="GO" id="GO:0008939">
    <property type="term" value="F:nicotinate-nucleotide-dimethylbenzimidazole phosphoribosyltransferase activity"/>
    <property type="evidence" value="ECO:0007669"/>
    <property type="project" value="InterPro"/>
</dbReference>
<dbReference type="CDD" id="cd02439">
    <property type="entry name" value="DMB-PRT_CobT"/>
    <property type="match status" value="1"/>
</dbReference>
<dbReference type="Gene3D" id="3.40.50.10210">
    <property type="match status" value="1"/>
</dbReference>
<dbReference type="HAMAP" id="MF_01086">
    <property type="entry name" value="UPF0284"/>
    <property type="match status" value="1"/>
</dbReference>
<dbReference type="InterPro" id="IPR003200">
    <property type="entry name" value="Nict_dMeBzImd_PRibTrfase"/>
</dbReference>
<dbReference type="InterPro" id="IPR002805">
    <property type="entry name" value="Nict_dMeBzImd_PRibTrfase_arc"/>
</dbReference>
<dbReference type="InterPro" id="IPR036087">
    <property type="entry name" value="Nict_dMeBzImd_PRibTrfase_sf"/>
</dbReference>
<dbReference type="NCBIfam" id="NF003369">
    <property type="entry name" value="PRK04447.1-2"/>
    <property type="match status" value="1"/>
</dbReference>
<dbReference type="PANTHER" id="PTHR38811">
    <property type="match status" value="1"/>
</dbReference>
<dbReference type="PANTHER" id="PTHR38811:SF1">
    <property type="entry name" value="UPF0284 PROTEIN SLL1500"/>
    <property type="match status" value="1"/>
</dbReference>
<dbReference type="Pfam" id="PF02277">
    <property type="entry name" value="DBI_PRT"/>
    <property type="match status" value="1"/>
</dbReference>
<dbReference type="SUPFAM" id="SSF52733">
    <property type="entry name" value="Nicotinate mononucleotide:5,6-dimethylbenzimidazole phosphoribosyltransferase (CobT)"/>
    <property type="match status" value="1"/>
</dbReference>
<evidence type="ECO:0000255" key="1">
    <source>
        <dbReference type="HAMAP-Rule" id="MF_01086"/>
    </source>
</evidence>
<evidence type="ECO:0000305" key="2"/>
<organism>
    <name type="scientific">Prochlorococcus marinus (strain MIT 9313)</name>
    <dbReference type="NCBI Taxonomy" id="74547"/>
    <lineage>
        <taxon>Bacteria</taxon>
        <taxon>Bacillati</taxon>
        <taxon>Cyanobacteriota</taxon>
        <taxon>Cyanophyceae</taxon>
        <taxon>Synechococcales</taxon>
        <taxon>Prochlorococcaceae</taxon>
        <taxon>Prochlorococcus</taxon>
    </lineage>
</organism>
<accession>P59919</accession>
<sequence>MASLPCIPSNFKPGSPPRGLPLACKAFGAGASLAAQERWLMPWRDGGLGFSLLLVLAGTRTAEVEGISAAGATSAARRFTAVADAELLLKGPDRPRLCSLPPLPAGISPALISYVAARWIGVDPLVAAVGLTLSPPFPHLRLEVPGMGPAACLSTGEAMGLSRVHALWQRGFCLGRGLRRPLVLAECVPGGTTTAQAVLTGLGLQVADLISGSARQAPMILKQELVDRGLSKAALGFNPPPQRVIAALGDPFQPVAVGLLLGAREAGQPVMLGGGSQMVAVLALALAAMEPSHRQDMVDGIVLGTTSWLAEEAKRSDGRPGALECLIDCVGEFFGVRLLGLATGLRFNNSQHRALQDYELGYVKEGVGAGALALLAQLQGASCEQLLEACDQAMNQLLGTSYS</sequence>
<gene>
    <name type="ordered locus">PMT_1350</name>
</gene>
<comment type="similarity">
    <text evidence="1">Belongs to the UPF0284 family.</text>
</comment>
<comment type="sequence caution" evidence="2">
    <conflict type="erroneous initiation">
        <sequence resource="EMBL-CDS" id="CAE21525"/>
    </conflict>
</comment>
<name>Y1350_PROMM</name>
<reference key="1">
    <citation type="journal article" date="2003" name="Nature">
        <title>Genome divergence in two Prochlorococcus ecotypes reflects oceanic niche differentiation.</title>
        <authorList>
            <person name="Rocap G."/>
            <person name="Larimer F.W."/>
            <person name="Lamerdin J.E."/>
            <person name="Malfatti S."/>
            <person name="Chain P."/>
            <person name="Ahlgren N.A."/>
            <person name="Arellano A."/>
            <person name="Coleman M."/>
            <person name="Hauser L."/>
            <person name="Hess W.R."/>
            <person name="Johnson Z.I."/>
            <person name="Land M.L."/>
            <person name="Lindell D."/>
            <person name="Post A.F."/>
            <person name="Regala W."/>
            <person name="Shah M."/>
            <person name="Shaw S.L."/>
            <person name="Steglich C."/>
            <person name="Sullivan M.B."/>
            <person name="Ting C.S."/>
            <person name="Tolonen A."/>
            <person name="Webb E.A."/>
            <person name="Zinser E.R."/>
            <person name="Chisholm S.W."/>
        </authorList>
    </citation>
    <scope>NUCLEOTIDE SEQUENCE [LARGE SCALE GENOMIC DNA]</scope>
    <source>
        <strain>MIT 9313</strain>
    </source>
</reference>
<keyword id="KW-1185">Reference proteome</keyword>
<proteinExistence type="inferred from homology"/>